<protein>
    <recommendedName>
        <fullName evidence="3">Defensin alpha 5</fullName>
    </recommendedName>
    <alternativeName>
        <fullName evidence="3">Defensin-5</fullName>
    </alternativeName>
    <alternativeName>
        <fullName evidence="3">HD5(20-94)</fullName>
    </alternativeName>
    <component>
        <recommendedName>
            <fullName evidence="3">HD5(23-94)</fullName>
        </recommendedName>
    </component>
    <component>
        <recommendedName>
            <fullName evidence="3">HD5(29-94)</fullName>
        </recommendedName>
    </component>
    <component>
        <recommendedName>
            <fullName evidence="3">HD5(56-94)</fullName>
        </recommendedName>
    </component>
    <component>
        <recommendedName>
            <fullName evidence="3">HD5(63-94)</fullName>
        </recommendedName>
    </component>
</protein>
<dbReference type="EMBL" id="AY746439">
    <property type="protein sequence ID" value="AAW78342.1"/>
    <property type="molecule type" value="mRNA"/>
</dbReference>
<dbReference type="RefSeq" id="NP_001012657.1">
    <property type="nucleotide sequence ID" value="NM_001012639.1"/>
</dbReference>
<dbReference type="SMR" id="Q5G861"/>
<dbReference type="FunCoup" id="Q5G861">
    <property type="interactions" value="265"/>
</dbReference>
<dbReference type="STRING" id="9598.ENSPTRP00000072107"/>
<dbReference type="PaxDb" id="9598-ENSPTRP00000034189"/>
<dbReference type="Ensembl" id="ENSPTRT00000103608.1">
    <property type="protein sequence ID" value="ENSPTRP00000072107.1"/>
    <property type="gene ID" value="ENSPTRG00000049316.1"/>
</dbReference>
<dbReference type="GeneID" id="463972"/>
<dbReference type="KEGG" id="ptr:463972"/>
<dbReference type="CTD" id="1670"/>
<dbReference type="VGNC" id="VGNC:3022">
    <property type="gene designation" value="DEFA5"/>
</dbReference>
<dbReference type="eggNOG" id="ENOG502T2EX">
    <property type="taxonomic scope" value="Eukaryota"/>
</dbReference>
<dbReference type="GeneTree" id="ENSGT00940000153268"/>
<dbReference type="HOGENOM" id="CLU_160803_3_0_1"/>
<dbReference type="InParanoid" id="Q5G861"/>
<dbReference type="OMA" id="ATCYCRT"/>
<dbReference type="OrthoDB" id="16498at9604"/>
<dbReference type="TreeFam" id="TF338414"/>
<dbReference type="Proteomes" id="UP000002277">
    <property type="component" value="Chromosome 8"/>
</dbReference>
<dbReference type="Bgee" id="ENSPTRG00000049316">
    <property type="expression patterns" value="Expressed in testis"/>
</dbReference>
<dbReference type="GO" id="GO:0005615">
    <property type="term" value="C:extracellular space"/>
    <property type="evidence" value="ECO:0000250"/>
    <property type="project" value="UniProtKB"/>
</dbReference>
<dbReference type="GO" id="GO:0005796">
    <property type="term" value="C:Golgi lumen"/>
    <property type="evidence" value="ECO:0007669"/>
    <property type="project" value="UniProtKB-ARBA"/>
</dbReference>
<dbReference type="GO" id="GO:0030496">
    <property type="term" value="C:midbody"/>
    <property type="evidence" value="ECO:0007669"/>
    <property type="project" value="Ensembl"/>
</dbReference>
<dbReference type="GO" id="GO:0030141">
    <property type="term" value="C:secretory granule"/>
    <property type="evidence" value="ECO:0000250"/>
    <property type="project" value="UniProtKB"/>
</dbReference>
<dbReference type="GO" id="GO:0030133">
    <property type="term" value="C:transport vesicle"/>
    <property type="evidence" value="ECO:0007669"/>
    <property type="project" value="UniProtKB-SubCell"/>
</dbReference>
<dbReference type="GO" id="GO:0042803">
    <property type="term" value="F:protein homodimerization activity"/>
    <property type="evidence" value="ECO:0000250"/>
    <property type="project" value="UniProtKB"/>
</dbReference>
<dbReference type="GO" id="GO:0019731">
    <property type="term" value="P:antibacterial humoral response"/>
    <property type="evidence" value="ECO:0000318"/>
    <property type="project" value="GO_Central"/>
</dbReference>
<dbReference type="GO" id="GO:0061844">
    <property type="term" value="P:antimicrobial humoral immune response mediated by antimicrobial peptide"/>
    <property type="evidence" value="ECO:0000250"/>
    <property type="project" value="UniProtKB"/>
</dbReference>
<dbReference type="GO" id="GO:0071222">
    <property type="term" value="P:cellular response to lipopolysaccharide"/>
    <property type="evidence" value="ECO:0000318"/>
    <property type="project" value="GO_Central"/>
</dbReference>
<dbReference type="GO" id="GO:0050832">
    <property type="term" value="P:defense response to fungus"/>
    <property type="evidence" value="ECO:0007669"/>
    <property type="project" value="UniProtKB-KW"/>
</dbReference>
<dbReference type="GO" id="GO:0050829">
    <property type="term" value="P:defense response to Gram-negative bacterium"/>
    <property type="evidence" value="ECO:0000250"/>
    <property type="project" value="UniProtKB"/>
</dbReference>
<dbReference type="GO" id="GO:0050830">
    <property type="term" value="P:defense response to Gram-positive bacterium"/>
    <property type="evidence" value="ECO:0000250"/>
    <property type="project" value="UniProtKB"/>
</dbReference>
<dbReference type="GO" id="GO:0051673">
    <property type="term" value="P:disruption of plasma membrane integrity in another organism"/>
    <property type="evidence" value="ECO:0000318"/>
    <property type="project" value="GO_Central"/>
</dbReference>
<dbReference type="GO" id="GO:0002227">
    <property type="term" value="P:innate immune response in mucosa"/>
    <property type="evidence" value="ECO:0000318"/>
    <property type="project" value="GO_Central"/>
</dbReference>
<dbReference type="GO" id="GO:0051873">
    <property type="term" value="P:killing by host of symbiont cells"/>
    <property type="evidence" value="ECO:0007669"/>
    <property type="project" value="Ensembl"/>
</dbReference>
<dbReference type="GO" id="GO:0032757">
    <property type="term" value="P:positive regulation of interleukin-8 production"/>
    <property type="evidence" value="ECO:0000250"/>
    <property type="project" value="UniProtKB"/>
</dbReference>
<dbReference type="GO" id="GO:1905710">
    <property type="term" value="P:positive regulation of membrane permeability"/>
    <property type="evidence" value="ECO:0007669"/>
    <property type="project" value="Ensembl"/>
</dbReference>
<dbReference type="GO" id="GO:0051289">
    <property type="term" value="P:protein homotetramerization"/>
    <property type="evidence" value="ECO:0000250"/>
    <property type="project" value="UniProtKB"/>
</dbReference>
<dbReference type="InterPro" id="IPR016327">
    <property type="entry name" value="Alpha-defensin"/>
</dbReference>
<dbReference type="InterPro" id="IPR006081">
    <property type="entry name" value="Alpha-defensin_C"/>
</dbReference>
<dbReference type="InterPro" id="IPR002366">
    <property type="entry name" value="Alpha-defensin_N"/>
</dbReference>
<dbReference type="InterPro" id="IPR006080">
    <property type="entry name" value="Beta/alpha-defensin_C"/>
</dbReference>
<dbReference type="PANTHER" id="PTHR11876">
    <property type="entry name" value="ALPHA-DEFENSIN 1"/>
    <property type="match status" value="1"/>
</dbReference>
<dbReference type="PANTHER" id="PTHR11876:SF6">
    <property type="entry name" value="DEFENSIN ALPHA 5"/>
    <property type="match status" value="1"/>
</dbReference>
<dbReference type="Pfam" id="PF00323">
    <property type="entry name" value="Defensin_1"/>
    <property type="match status" value="1"/>
</dbReference>
<dbReference type="Pfam" id="PF00879">
    <property type="entry name" value="Defensin_propep"/>
    <property type="match status" value="1"/>
</dbReference>
<dbReference type="PIRSF" id="PIRSF001875">
    <property type="entry name" value="Alpha-defensin"/>
    <property type="match status" value="1"/>
</dbReference>
<dbReference type="SMART" id="SM01418">
    <property type="entry name" value="Defensin_propep"/>
    <property type="match status" value="1"/>
</dbReference>
<dbReference type="SMART" id="SM00048">
    <property type="entry name" value="DEFSN"/>
    <property type="match status" value="1"/>
</dbReference>
<dbReference type="SUPFAM" id="SSF57392">
    <property type="entry name" value="Defensin-like"/>
    <property type="match status" value="1"/>
</dbReference>
<dbReference type="PROSITE" id="PS00269">
    <property type="entry name" value="DEFENSIN"/>
    <property type="match status" value="1"/>
</dbReference>
<comment type="function">
    <text evidence="1">Host-defense peptide that maintains sterility in the urogenital system (By similarity). Has antimicrobial activity against a wide range of bacteria, including Gram-negative E.coli, P.aeruginosa and S.typhimurium, and Gram-positive E.aerogenes, S.aureus, B.cereus, E.faecium and L.monocytogenes (By similarity). Confers resistance to intestinal infection by S.typhimurium (By similarity). Exhibits antimicrobial activity against enteric commensal bacteria such as B.adolescentis, L.acidophilus, B.breve, L.fermentum, B.longum and S.thermophilus (By similarity). Binds to bacterial membranes and causes membrane disintegration (By similarity). Induces the secretion of the chemokine IL-8 by intestinal epithelial cells (By similarity). Binds to B.antracis lef/lethal factor, a major virulence factor from B.anthracis, and neutralizes its enzymatic activity (By similarity).</text>
</comment>
<comment type="subunit">
    <text evidence="1">Homodimer (By similarity). Homotetramer (By similarity). Interacts with B.antracis lef/lethal factor (By similarity).</text>
</comment>
<comment type="subcellular location">
    <subcellularLocation>
        <location evidence="1">Secreted</location>
    </subcellularLocation>
    <subcellularLocation>
        <location evidence="1">Cytoplasmic vesicle</location>
        <location evidence="1">Secretory vesicle</location>
    </subcellularLocation>
    <text evidence="1">Stored as propeptide HD5(20-94) in secretory granules of small intestinal Paneth cells and found in the ileum lumen as processed mature peptides, predominantly in the HD5(63-94) form. Peptides HD5(20-94), HD5(23-94) and HD5(29-94) are found within tissues, HD5(20-94) being the predominant intracellular form. Peptides HD5(56-94) and HD5(63-94) are found in the extracellular milieu, HD5(63-94) being the most abundant form (By similarity). Secreted into the female genital tract lumen (By similarity).</text>
</comment>
<comment type="PTM">
    <text evidence="1">Glycosylated.</text>
</comment>
<comment type="PTM">
    <text evidence="1">Proteolytically cleaved at Arg-62 by trypsin (By similarity). Both the propeptide form proHD5/HD5(20-94) and HD5(56-94) are cleaved into the lumenal peptide form HD5(63-94) by trypsin (By similarity). Unprocessed proHD5 exerts antimicrobial activities, but peptide potency is enhanced by peptide processing (By similarity). Proteolytically cleaved in duodenal fluid; derived fragments are antimicrobially active against commensal bacteria (in vitro) (By similarity).</text>
</comment>
<comment type="similarity">
    <text evidence="3">Belongs to the alpha-defensin family.</text>
</comment>
<comment type="caution">
    <text evidence="1">It was shown by two studies that dimerization of DEFA5 is crucial for antimicrobial activity (By similarity). Another study, however, states that dimer formation is not indispensable for antimicrobial activity of DEFA5 (By similarity).</text>
</comment>
<proteinExistence type="inferred from homology"/>
<gene>
    <name type="primary">DEFA5</name>
</gene>
<feature type="signal peptide" evidence="2">
    <location>
        <begin position="1"/>
        <end position="19"/>
    </location>
</feature>
<feature type="peptide" id="PRO_0000006789" description="Defensin alpha 5">
    <location>
        <begin position="20"/>
        <end position="94"/>
    </location>
</feature>
<feature type="peptide" id="PRO_0000417391" description="HD5(23-94)" evidence="1">
    <location>
        <begin position="23"/>
        <end position="94"/>
    </location>
</feature>
<feature type="peptide" id="PRO_0000417392" description="HD5(29-94)" evidence="1">
    <location>
        <begin position="29"/>
        <end position="94"/>
    </location>
</feature>
<feature type="peptide" id="PRO_0000417393" description="HD5(56-94)" evidence="1">
    <location>
        <begin position="56"/>
        <end position="94"/>
    </location>
</feature>
<feature type="peptide" id="PRO_0000417394" description="HD5(63-94)" evidence="1">
    <location>
        <begin position="63"/>
        <end position="94"/>
    </location>
</feature>
<feature type="disulfide bond" evidence="1">
    <location>
        <begin position="65"/>
        <end position="93"/>
    </location>
</feature>
<feature type="disulfide bond" evidence="1">
    <location>
        <begin position="67"/>
        <end position="82"/>
    </location>
</feature>
<feature type="disulfide bond" evidence="1">
    <location>
        <begin position="72"/>
        <end position="92"/>
    </location>
</feature>
<accession>Q5G861</accession>
<evidence type="ECO:0000250" key="1">
    <source>
        <dbReference type="UniProtKB" id="Q01523"/>
    </source>
</evidence>
<evidence type="ECO:0000255" key="2"/>
<evidence type="ECO:0000305" key="3"/>
<name>DEF5_PANTR</name>
<organism>
    <name type="scientific">Pan troglodytes</name>
    <name type="common">Chimpanzee</name>
    <dbReference type="NCBI Taxonomy" id="9598"/>
    <lineage>
        <taxon>Eukaryota</taxon>
        <taxon>Metazoa</taxon>
        <taxon>Chordata</taxon>
        <taxon>Craniata</taxon>
        <taxon>Vertebrata</taxon>
        <taxon>Euteleostomi</taxon>
        <taxon>Mammalia</taxon>
        <taxon>Eutheria</taxon>
        <taxon>Euarchontoglires</taxon>
        <taxon>Primates</taxon>
        <taxon>Haplorrhini</taxon>
        <taxon>Catarrhini</taxon>
        <taxon>Hominidae</taxon>
        <taxon>Pan</taxon>
    </lineage>
</organism>
<keyword id="KW-0044">Antibiotic</keyword>
<keyword id="KW-0929">Antimicrobial</keyword>
<keyword id="KW-0968">Cytoplasmic vesicle</keyword>
<keyword id="KW-0211">Defensin</keyword>
<keyword id="KW-1015">Disulfide bond</keyword>
<keyword id="KW-0295">Fungicide</keyword>
<keyword id="KW-0325">Glycoprotein</keyword>
<keyword id="KW-0391">Immunity</keyword>
<keyword id="KW-0399">Innate immunity</keyword>
<keyword id="KW-1185">Reference proteome</keyword>
<keyword id="KW-0964">Secreted</keyword>
<keyword id="KW-0732">Signal</keyword>
<reference key="1">
    <citation type="journal article" date="2004" name="Physiol. Genomics">
        <title>Rapid evolution and diversification of mammalian alpha-defensins as revealed by comparative analysis of rodent and primate genes.</title>
        <authorList>
            <person name="Patil A."/>
            <person name="Hughes A.L."/>
            <person name="Zhang G."/>
        </authorList>
    </citation>
    <scope>NUCLEOTIDE SEQUENCE [MRNA]</scope>
</reference>
<sequence length="94" mass="10063">MRTIAILAAILLVALQAQAESLQERADEATTQKQSGEDNQDLAISFAGNGLSALRTSGSQARATCYCRIGHCTILESLSGVCEISGRLYRLCCR</sequence>